<protein>
    <recommendedName>
        <fullName>Probable cytochrome c-type biogenesis protein NrfE</fullName>
    </recommendedName>
</protein>
<proteinExistence type="inferred from homology"/>
<accession>P32710</accession>
<accession>Q2M6N0</accession>
<sequence length="552" mass="61295">MLTPLTAFAGVRLRWPAMMRLTCIGILAQFALLLLAFGVLTYCFLISDFSVIYVAQHSYSLLSWELKLAAVWGGHEGSLLLWVLLLSAWSALFAWHYRQQTDPLFPLTLAVLSLMLAALLLFVVLWSDPFVRIFPPAIEGRDLNPMLQHPGLIFHPPLLYLGYGGLMVAASVALASLLRGEFDGACARICWRWALPGWSALTAGIILGSWWAYCELGWGGWWFWDPVENASLLPWLSATALLHSLSLTRQRGIFCHWSLLLAIVTLMLSLLGTLIVRSGILVSVHAFALDNVRAVPLFSLFALISLASLALYGWRARDGGPAVHFSGLSREMLILATLLLFCAVLLIVLVGTLYPMIYGLLGWGRLSVGAPYFNRATLPFGLLMLVVIVLATFVSGKRVQLPALVAHAGVLLFAAGVVVSSVSRQEISLNLQPGQQVTLAGYTFRFECLDLQAKGNYTSEKAIVALFDHQQRIGELTPERRFYEARRQQMMEPSIRWNGIHDWYAVMGEKTGPDRYAFRLYVQSGVRWIWGGGLLMIAGALLSGWRGKKRDE</sequence>
<comment type="function">
    <text evidence="5">May be required for the biogenesis of c-type cytochromes. Possible subunit of a heme lyase.</text>
</comment>
<comment type="subcellular location">
    <subcellularLocation>
        <location evidence="2">Cell inner membrane</location>
        <topology evidence="5">Multi-pass membrane protein</topology>
    </subcellularLocation>
</comment>
<comment type="disruption phenotype">
    <text evidence="3">Triple nrfE-nrfF-nrfG deletion mutants no longer attach heme 1 (covalently attached to 'Cys-122', the CWSCK motif) of cytochrome c552 (AC P0ABK9).</text>
</comment>
<comment type="similarity">
    <text evidence="4">Belongs to the CcmF/CycK/Ccl1/NrfE/CcsA family.</text>
</comment>
<organism>
    <name type="scientific">Escherichia coli (strain K12)</name>
    <dbReference type="NCBI Taxonomy" id="83333"/>
    <lineage>
        <taxon>Bacteria</taxon>
        <taxon>Pseudomonadati</taxon>
        <taxon>Pseudomonadota</taxon>
        <taxon>Gammaproteobacteria</taxon>
        <taxon>Enterobacterales</taxon>
        <taxon>Enterobacteriaceae</taxon>
        <taxon>Escherichia</taxon>
    </lineage>
</organism>
<name>NRFE_ECOLI</name>
<evidence type="ECO:0000255" key="1"/>
<evidence type="ECO:0000269" key="2">
    <source>
    </source>
</evidence>
<evidence type="ECO:0000269" key="3">
    <source>
    </source>
</evidence>
<evidence type="ECO:0000305" key="4"/>
<evidence type="ECO:0000305" key="5">
    <source>
    </source>
</evidence>
<reference key="1">
    <citation type="journal article" date="1994" name="Mol. Microbiol.">
        <title>A seven-gene operon essential for formate-dependent nitrite reduction to ammonia by enteric bacteria.</title>
        <authorList>
            <person name="Hussain H.A."/>
            <person name="Grove J."/>
            <person name="Griffiths L."/>
            <person name="Busby S."/>
            <person name="Cole J."/>
        </authorList>
    </citation>
    <scope>NUCLEOTIDE SEQUENCE [GENOMIC DNA]</scope>
</reference>
<reference key="2">
    <citation type="journal article" date="1993" name="Nucleic Acids Res.">
        <title>Analysis of the Escherichia coli genome. IV. DNA sequence of the region from 89.2 to 92.8 minutes.</title>
        <authorList>
            <person name="Blattner F.R."/>
            <person name="Burland V.D."/>
            <person name="Plunkett G. III"/>
            <person name="Sofia H.J."/>
            <person name="Daniels D.L."/>
        </authorList>
    </citation>
    <scope>NUCLEOTIDE SEQUENCE [LARGE SCALE GENOMIC DNA]</scope>
    <source>
        <strain>K12 / MG1655 / ATCC 47076</strain>
    </source>
</reference>
<reference key="3">
    <citation type="journal article" date="1997" name="Science">
        <title>The complete genome sequence of Escherichia coli K-12.</title>
        <authorList>
            <person name="Blattner F.R."/>
            <person name="Plunkett G. III"/>
            <person name="Bloch C.A."/>
            <person name="Perna N.T."/>
            <person name="Burland V."/>
            <person name="Riley M."/>
            <person name="Collado-Vides J."/>
            <person name="Glasner J.D."/>
            <person name="Rode C.K."/>
            <person name="Mayhew G.F."/>
            <person name="Gregor J."/>
            <person name="Davis N.W."/>
            <person name="Kirkpatrick H.A."/>
            <person name="Goeden M.A."/>
            <person name="Rose D.J."/>
            <person name="Mau B."/>
            <person name="Shao Y."/>
        </authorList>
    </citation>
    <scope>NUCLEOTIDE SEQUENCE [LARGE SCALE GENOMIC DNA]</scope>
    <source>
        <strain>K12 / MG1655 / ATCC 47076</strain>
    </source>
</reference>
<reference key="4">
    <citation type="journal article" date="2006" name="Mol. Syst. Biol.">
        <title>Highly accurate genome sequences of Escherichia coli K-12 strains MG1655 and W3110.</title>
        <authorList>
            <person name="Hayashi K."/>
            <person name="Morooka N."/>
            <person name="Yamamoto Y."/>
            <person name="Fujita K."/>
            <person name="Isono K."/>
            <person name="Choi S."/>
            <person name="Ohtsubo E."/>
            <person name="Baba T."/>
            <person name="Wanner B.L."/>
            <person name="Mori H."/>
            <person name="Horiuchi T."/>
        </authorList>
    </citation>
    <scope>NUCLEOTIDE SEQUENCE [LARGE SCALE GENOMIC DNA]</scope>
    <source>
        <strain>K12 / W3110 / ATCC 27325 / DSM 5911</strain>
    </source>
</reference>
<reference key="5">
    <citation type="journal article" date="1998" name="Mol. Microbiol.">
        <title>Involvement of products of the nrfEFG genes in the covalent attachment of haem c to a novel cysteine-lysine motif in the cytochrome c552 nitrite reductase from Escherichia coli.</title>
        <authorList>
            <person name="Eaves D.J."/>
            <person name="Grove J."/>
            <person name="Staudenmann W."/>
            <person name="James P."/>
            <person name="Poole R.K."/>
            <person name="White S.A."/>
            <person name="Griffiths I."/>
            <person name="Cole J.A."/>
        </authorList>
    </citation>
    <scope>FUNCTION</scope>
    <scope>DISRUPTION PHENOTYPE</scope>
    <source>
        <strain>K12 / JCB7120</strain>
    </source>
</reference>
<reference key="6">
    <citation type="journal article" date="2005" name="Science">
        <title>Global topology analysis of the Escherichia coli inner membrane proteome.</title>
        <authorList>
            <person name="Daley D.O."/>
            <person name="Rapp M."/>
            <person name="Granseth E."/>
            <person name="Melen K."/>
            <person name="Drew D."/>
            <person name="von Heijne G."/>
        </authorList>
    </citation>
    <scope>SUBCELLULAR LOCATION</scope>
    <source>
        <strain>K12 / MG1655 / ATCC 47076</strain>
    </source>
</reference>
<dbReference type="EMBL" id="X72298">
    <property type="protein sequence ID" value="CAA51045.1"/>
    <property type="molecule type" value="Genomic_DNA"/>
</dbReference>
<dbReference type="EMBL" id="U00006">
    <property type="protein sequence ID" value="AAC43168.1"/>
    <property type="molecule type" value="Genomic_DNA"/>
</dbReference>
<dbReference type="EMBL" id="U00096">
    <property type="protein sequence ID" value="AAD13457.1"/>
    <property type="molecule type" value="Genomic_DNA"/>
</dbReference>
<dbReference type="EMBL" id="AP009048">
    <property type="protein sequence ID" value="BAE78076.1"/>
    <property type="molecule type" value="Genomic_DNA"/>
</dbReference>
<dbReference type="PIR" id="A65216">
    <property type="entry name" value="E57987"/>
</dbReference>
<dbReference type="RefSeq" id="NP_418498.1">
    <property type="nucleotide sequence ID" value="NC_000913.3"/>
</dbReference>
<dbReference type="SMR" id="P32710"/>
<dbReference type="BioGRID" id="4262677">
    <property type="interactions" value="7"/>
</dbReference>
<dbReference type="FunCoup" id="P32710">
    <property type="interactions" value="39"/>
</dbReference>
<dbReference type="STRING" id="511145.b4074"/>
<dbReference type="PaxDb" id="511145-b4074"/>
<dbReference type="EnsemblBacteria" id="AAD13457">
    <property type="protein sequence ID" value="AAD13457"/>
    <property type="gene ID" value="b4074"/>
</dbReference>
<dbReference type="GeneID" id="948579"/>
<dbReference type="KEGG" id="ecj:JW4035"/>
<dbReference type="KEGG" id="eco:b4074"/>
<dbReference type="PATRIC" id="fig|511145.12.peg.4197"/>
<dbReference type="EchoBASE" id="EB1891"/>
<dbReference type="eggNOG" id="COG1138">
    <property type="taxonomic scope" value="Bacteria"/>
</dbReference>
<dbReference type="HOGENOM" id="CLU_015041_3_0_6"/>
<dbReference type="InParanoid" id="P32710"/>
<dbReference type="OMA" id="TKTRRMQ"/>
<dbReference type="PhylomeDB" id="P32710"/>
<dbReference type="BioCyc" id="EcoCyc:EG11948-MONOMER"/>
<dbReference type="PRO" id="PR:P32710"/>
<dbReference type="Proteomes" id="UP000000625">
    <property type="component" value="Chromosome"/>
</dbReference>
<dbReference type="GO" id="GO:0005886">
    <property type="term" value="C:plasma membrane"/>
    <property type="evidence" value="ECO:0000314"/>
    <property type="project" value="EcoCyc"/>
</dbReference>
<dbReference type="GO" id="GO:0020037">
    <property type="term" value="F:heme binding"/>
    <property type="evidence" value="ECO:0007669"/>
    <property type="project" value="InterPro"/>
</dbReference>
<dbReference type="GO" id="GO:0015232">
    <property type="term" value="F:heme transmembrane transporter activity"/>
    <property type="evidence" value="ECO:0007669"/>
    <property type="project" value="InterPro"/>
</dbReference>
<dbReference type="GO" id="GO:0017004">
    <property type="term" value="P:cytochrome complex assembly"/>
    <property type="evidence" value="ECO:0007669"/>
    <property type="project" value="UniProtKB-KW"/>
</dbReference>
<dbReference type="InterPro" id="IPR032523">
    <property type="entry name" value="CcmF_C"/>
</dbReference>
<dbReference type="InterPro" id="IPR002541">
    <property type="entry name" value="Cyt_c_assembly"/>
</dbReference>
<dbReference type="InterPro" id="IPR003567">
    <property type="entry name" value="Cyt_c_biogenesis"/>
</dbReference>
<dbReference type="InterPro" id="IPR003568">
    <property type="entry name" value="Cyt_c_biogenesis_CcmF"/>
</dbReference>
<dbReference type="InterPro" id="IPR003570">
    <property type="entry name" value="Cyt_c_biogenesis_NrfE"/>
</dbReference>
<dbReference type="NCBIfam" id="TIGR00353">
    <property type="entry name" value="nrfE"/>
    <property type="match status" value="1"/>
</dbReference>
<dbReference type="NCBIfam" id="NF007691">
    <property type="entry name" value="PRK10369.1"/>
    <property type="match status" value="1"/>
</dbReference>
<dbReference type="PANTHER" id="PTHR43653">
    <property type="entry name" value="CYTOCHROME C ASSEMBLY PROTEIN-RELATED"/>
    <property type="match status" value="1"/>
</dbReference>
<dbReference type="PANTHER" id="PTHR43653:SF3">
    <property type="entry name" value="CYTOCHROME C-TYPE BIOGENESIS PROTEIN NRFE-RELATED"/>
    <property type="match status" value="1"/>
</dbReference>
<dbReference type="Pfam" id="PF16327">
    <property type="entry name" value="CcmF_C"/>
    <property type="match status" value="2"/>
</dbReference>
<dbReference type="Pfam" id="PF01578">
    <property type="entry name" value="Cytochrom_C_asm"/>
    <property type="match status" value="1"/>
</dbReference>
<dbReference type="PRINTS" id="PR01410">
    <property type="entry name" value="CCBIOGENESIS"/>
</dbReference>
<dbReference type="PRINTS" id="PR01413">
    <property type="entry name" value="NRFEBIOGNSIS"/>
</dbReference>
<keyword id="KW-0997">Cell inner membrane</keyword>
<keyword id="KW-1003">Cell membrane</keyword>
<keyword id="KW-0201">Cytochrome c-type biogenesis</keyword>
<keyword id="KW-0472">Membrane</keyword>
<keyword id="KW-1185">Reference proteome</keyword>
<keyword id="KW-0812">Transmembrane</keyword>
<keyword id="KW-1133">Transmembrane helix</keyword>
<feature type="chain" id="PRO_0000201589" description="Probable cytochrome c-type biogenesis protein NrfE">
    <location>
        <begin position="1"/>
        <end position="552"/>
    </location>
</feature>
<feature type="transmembrane region" description="Helical" evidence="1">
    <location>
        <begin position="26"/>
        <end position="46"/>
    </location>
</feature>
<feature type="transmembrane region" description="Helical" evidence="1">
    <location>
        <begin position="77"/>
        <end position="97"/>
    </location>
</feature>
<feature type="transmembrane region" description="Helical" evidence="1">
    <location>
        <begin position="105"/>
        <end position="125"/>
    </location>
</feature>
<feature type="transmembrane region" description="Helical" evidence="1">
    <location>
        <begin position="158"/>
        <end position="178"/>
    </location>
</feature>
<feature type="transmembrane region" description="Helical" evidence="1">
    <location>
        <begin position="193"/>
        <end position="213"/>
    </location>
</feature>
<feature type="transmembrane region" description="Helical" evidence="1">
    <location>
        <begin position="228"/>
        <end position="247"/>
    </location>
</feature>
<feature type="transmembrane region" description="Helical" evidence="1">
    <location>
        <begin position="256"/>
        <end position="276"/>
    </location>
</feature>
<feature type="transmembrane region" description="Helical" evidence="1">
    <location>
        <begin position="294"/>
        <end position="314"/>
    </location>
</feature>
<feature type="transmembrane region" description="Helical" evidence="1">
    <location>
        <begin position="333"/>
        <end position="353"/>
    </location>
</feature>
<feature type="transmembrane region" description="Helical" evidence="1">
    <location>
        <begin position="376"/>
        <end position="396"/>
    </location>
</feature>
<feature type="transmembrane region" description="Helical" evidence="1">
    <location>
        <begin position="399"/>
        <end position="419"/>
    </location>
</feature>
<feature type="transmembrane region" description="Helical" evidence="1">
    <location>
        <begin position="525"/>
        <end position="545"/>
    </location>
</feature>
<feature type="sequence conflict" description="In Ref. 1; CAA51045." evidence="4" ref="1">
    <original>L</original>
    <variation>V</variation>
    <location>
        <position position="32"/>
    </location>
</feature>
<feature type="sequence conflict" description="In Ref. 1; CAA51045." evidence="4" ref="1">
    <original>G</original>
    <variation>A</variation>
    <location>
        <position position="38"/>
    </location>
</feature>
<feature type="sequence conflict" description="In Ref. 1; CAA51045." evidence="4" ref="1">
    <original>C</original>
    <variation>S</variation>
    <location>
        <position position="190"/>
    </location>
</feature>
<feature type="sequence conflict" description="In Ref. 1; CAA51045." evidence="4" ref="1">
    <original>W</original>
    <variation>L</variation>
    <location>
        <position position="218"/>
    </location>
</feature>
<feature type="sequence conflict" description="In Ref. 1; CAA51045." evidence="4" ref="1">
    <original>GWWFWDP</original>
    <variation>RLVVLGS</variation>
    <location>
        <begin position="220"/>
        <end position="226"/>
    </location>
</feature>
<feature type="sequence conflict" description="In Ref. 1; CAA51045." evidence="4" ref="1">
    <original>G</original>
    <variation>A</variation>
    <location>
        <position position="455"/>
    </location>
</feature>
<feature type="sequence conflict" description="In Ref. 1; CAA51045." evidence="4" ref="1">
    <original>R</original>
    <variation>A</variation>
    <location>
        <position position="481"/>
    </location>
</feature>
<gene>
    <name type="primary">nrfE</name>
    <name type="synonym">yjcL</name>
    <name type="ordered locus">b4074</name>
    <name type="ordered locus">JW4035</name>
</gene>